<keyword id="KW-0963">Cytoplasm</keyword>
<keyword id="KW-0597">Phosphoprotein</keyword>
<keyword id="KW-1185">Reference proteome</keyword>
<keyword id="KW-0687">Ribonucleoprotein</keyword>
<keyword id="KW-0689">Ribosomal protein</keyword>
<gene>
    <name type="primary">rpp202</name>
    <name type="synonym">rpa4</name>
    <name type="synonym">rpp2-2</name>
    <name type="synonym">rpp2b</name>
    <name type="ORF">SPBC23G7.15c</name>
</gene>
<feature type="chain" id="PRO_0000157684" description="Large ribosomal subunit protein P2B">
    <location>
        <begin position="1"/>
        <end position="110"/>
    </location>
</feature>
<feature type="region of interest" description="Disordered" evidence="2">
    <location>
        <begin position="73"/>
        <end position="110"/>
    </location>
</feature>
<feature type="compositionally biased region" description="Low complexity" evidence="2">
    <location>
        <begin position="73"/>
        <end position="88"/>
    </location>
</feature>
<feature type="compositionally biased region" description="Acidic residues" evidence="2">
    <location>
        <begin position="91"/>
        <end position="104"/>
    </location>
</feature>
<feature type="modified residue" description="Phosphoserine" evidence="4">
    <location>
        <position position="100"/>
    </location>
</feature>
<evidence type="ECO:0000250" key="1">
    <source>
        <dbReference type="UniProtKB" id="P02400"/>
    </source>
</evidence>
<evidence type="ECO:0000256" key="2">
    <source>
        <dbReference type="SAM" id="MobiDB-lite"/>
    </source>
</evidence>
<evidence type="ECO:0000269" key="3">
    <source>
    </source>
</evidence>
<evidence type="ECO:0000269" key="4">
    <source>
    </source>
</evidence>
<evidence type="ECO:0000305" key="5"/>
<sequence length="110" mass="11120">MKYLAAYLLLTVGGKQSPSASDIESVLSTVGIEAEAERVESLISELNGKNIEELIAAGNEKLSTVPSAGAVATPAAGGAAGAEATSAAEEAKEEEAAEESDEDMGFGLFD</sequence>
<name>RLA4_SCHPO</name>
<organism>
    <name type="scientific">Schizosaccharomyces pombe (strain 972 / ATCC 24843)</name>
    <name type="common">Fission yeast</name>
    <dbReference type="NCBI Taxonomy" id="284812"/>
    <lineage>
        <taxon>Eukaryota</taxon>
        <taxon>Fungi</taxon>
        <taxon>Dikarya</taxon>
        <taxon>Ascomycota</taxon>
        <taxon>Taphrinomycotina</taxon>
        <taxon>Schizosaccharomycetes</taxon>
        <taxon>Schizosaccharomycetales</taxon>
        <taxon>Schizosaccharomycetaceae</taxon>
        <taxon>Schizosaccharomyces</taxon>
    </lineage>
</organism>
<protein>
    <recommendedName>
        <fullName evidence="5">Large ribosomal subunit protein P2B</fullName>
    </recommendedName>
    <alternativeName>
        <fullName>60S acidic ribosomal protein P2-beta</fullName>
    </alternativeName>
    <alternativeName>
        <fullName>A4</fullName>
    </alternativeName>
</protein>
<accession>P17478</accession>
<reference key="1">
    <citation type="journal article" date="1990" name="Mol. Cell. Biol.">
        <title>A gene family for acidic ribosomal proteins in Schizosaccharomyces pombe: two essential and two nonessential genes.</title>
        <authorList>
            <person name="Beltrame M."/>
            <person name="Bianchi M.E."/>
        </authorList>
    </citation>
    <scope>NUCLEOTIDE SEQUENCE [GENOMIC DNA]</scope>
</reference>
<reference key="2">
    <citation type="journal article" date="2002" name="Nature">
        <title>The genome sequence of Schizosaccharomyces pombe.</title>
        <authorList>
            <person name="Wood V."/>
            <person name="Gwilliam R."/>
            <person name="Rajandream M.A."/>
            <person name="Lyne M.H."/>
            <person name="Lyne R."/>
            <person name="Stewart A."/>
            <person name="Sgouros J.G."/>
            <person name="Peat N."/>
            <person name="Hayles J."/>
            <person name="Baker S.G."/>
            <person name="Basham D."/>
            <person name="Bowman S."/>
            <person name="Brooks K."/>
            <person name="Brown D."/>
            <person name="Brown S."/>
            <person name="Chillingworth T."/>
            <person name="Churcher C.M."/>
            <person name="Collins M."/>
            <person name="Connor R."/>
            <person name="Cronin A."/>
            <person name="Davis P."/>
            <person name="Feltwell T."/>
            <person name="Fraser A."/>
            <person name="Gentles S."/>
            <person name="Goble A."/>
            <person name="Hamlin N."/>
            <person name="Harris D.E."/>
            <person name="Hidalgo J."/>
            <person name="Hodgson G."/>
            <person name="Holroyd S."/>
            <person name="Hornsby T."/>
            <person name="Howarth S."/>
            <person name="Huckle E.J."/>
            <person name="Hunt S."/>
            <person name="Jagels K."/>
            <person name="James K.D."/>
            <person name="Jones L."/>
            <person name="Jones M."/>
            <person name="Leather S."/>
            <person name="McDonald S."/>
            <person name="McLean J."/>
            <person name="Mooney P."/>
            <person name="Moule S."/>
            <person name="Mungall K.L."/>
            <person name="Murphy L.D."/>
            <person name="Niblett D."/>
            <person name="Odell C."/>
            <person name="Oliver K."/>
            <person name="O'Neil S."/>
            <person name="Pearson D."/>
            <person name="Quail M.A."/>
            <person name="Rabbinowitsch E."/>
            <person name="Rutherford K.M."/>
            <person name="Rutter S."/>
            <person name="Saunders D."/>
            <person name="Seeger K."/>
            <person name="Sharp S."/>
            <person name="Skelton J."/>
            <person name="Simmonds M.N."/>
            <person name="Squares R."/>
            <person name="Squares S."/>
            <person name="Stevens K."/>
            <person name="Taylor K."/>
            <person name="Taylor R.G."/>
            <person name="Tivey A."/>
            <person name="Walsh S.V."/>
            <person name="Warren T."/>
            <person name="Whitehead S."/>
            <person name="Woodward J.R."/>
            <person name="Volckaert G."/>
            <person name="Aert R."/>
            <person name="Robben J."/>
            <person name="Grymonprez B."/>
            <person name="Weltjens I."/>
            <person name="Vanstreels E."/>
            <person name="Rieger M."/>
            <person name="Schaefer M."/>
            <person name="Mueller-Auer S."/>
            <person name="Gabel C."/>
            <person name="Fuchs M."/>
            <person name="Duesterhoeft A."/>
            <person name="Fritzc C."/>
            <person name="Holzer E."/>
            <person name="Moestl D."/>
            <person name="Hilbert H."/>
            <person name="Borzym K."/>
            <person name="Langer I."/>
            <person name="Beck A."/>
            <person name="Lehrach H."/>
            <person name="Reinhardt R."/>
            <person name="Pohl T.M."/>
            <person name="Eger P."/>
            <person name="Zimmermann W."/>
            <person name="Wedler H."/>
            <person name="Wambutt R."/>
            <person name="Purnelle B."/>
            <person name="Goffeau A."/>
            <person name="Cadieu E."/>
            <person name="Dreano S."/>
            <person name="Gloux S."/>
            <person name="Lelaure V."/>
            <person name="Mottier S."/>
            <person name="Galibert F."/>
            <person name="Aves S.J."/>
            <person name="Xiang Z."/>
            <person name="Hunt C."/>
            <person name="Moore K."/>
            <person name="Hurst S.M."/>
            <person name="Lucas M."/>
            <person name="Rochet M."/>
            <person name="Gaillardin C."/>
            <person name="Tallada V.A."/>
            <person name="Garzon A."/>
            <person name="Thode G."/>
            <person name="Daga R.R."/>
            <person name="Cruzado L."/>
            <person name="Jimenez J."/>
            <person name="Sanchez M."/>
            <person name="del Rey F."/>
            <person name="Benito J."/>
            <person name="Dominguez A."/>
            <person name="Revuelta J.L."/>
            <person name="Moreno S."/>
            <person name="Armstrong J."/>
            <person name="Forsburg S.L."/>
            <person name="Cerutti L."/>
            <person name="Lowe T."/>
            <person name="McCombie W.R."/>
            <person name="Paulsen I."/>
            <person name="Potashkin J."/>
            <person name="Shpakovski G.V."/>
            <person name="Ussery D."/>
            <person name="Barrell B.G."/>
            <person name="Nurse P."/>
        </authorList>
    </citation>
    <scope>NUCLEOTIDE SEQUENCE [LARGE SCALE GENOMIC DNA]</scope>
    <source>
        <strain>972 / ATCC 24843</strain>
    </source>
</reference>
<reference key="3">
    <citation type="journal article" date="2006" name="Nat. Biotechnol.">
        <title>ORFeome cloning and global analysis of protein localization in the fission yeast Schizosaccharomyces pombe.</title>
        <authorList>
            <person name="Matsuyama A."/>
            <person name="Arai R."/>
            <person name="Yashiroda Y."/>
            <person name="Shirai A."/>
            <person name="Kamata A."/>
            <person name="Sekido S."/>
            <person name="Kobayashi Y."/>
            <person name="Hashimoto A."/>
            <person name="Hamamoto M."/>
            <person name="Hiraoka Y."/>
            <person name="Horinouchi S."/>
            <person name="Yoshida M."/>
        </authorList>
    </citation>
    <scope>SUBCELLULAR LOCATION [LARGE SCALE ANALYSIS]</scope>
</reference>
<reference key="4">
    <citation type="journal article" date="2008" name="J. Proteome Res.">
        <title>Phosphoproteome analysis of fission yeast.</title>
        <authorList>
            <person name="Wilson-Grady J.T."/>
            <person name="Villen J."/>
            <person name="Gygi S.P."/>
        </authorList>
    </citation>
    <scope>PHOSPHORYLATION [LARGE SCALE ANALYSIS] AT SER-100</scope>
    <scope>IDENTIFICATION BY MASS SPECTROMETRY</scope>
</reference>
<comment type="function">
    <text evidence="1">Component of the ribosome, a large ribonucleoprotein complex responsible for the synthesis of proteins in the cell. The small ribosomal subunit (SSU) binds messenger RNAs (mRNAs) and translates the encoded message by selecting cognate aminoacyl-transfer RNA (tRNA) molecules. The large subunit (LSU) contains the ribosomal catalytic site termed the peptidyl transferase center (PTC), which catalyzes the formation of peptide bonds, thereby polymerizing the amino acids delivered by tRNAs into a polypeptide chain. The nascent polypeptides leave the ribosome through a tunnel in the LSU and interact with protein factors that function in enzymatic processing, targeting, and the membrane insertion of nascent chains at the exit of the ribosomal tunnel.</text>
</comment>
<comment type="subunit">
    <text evidence="1">Component of the large ribosomal subunit (LSU). Mature yeast ribosomes consist of a small (40S) and a large (60S) subunit. The 40S small subunit contains 1 molecule of ribosomal RNA (18S rRNA) and at least 33 different proteins. The large 60S subunit contains 3 rRNA molecules (25S, 5.8S and 5S rRNA) and at least 46 different proteins. The acidic ribosomal P-proteins form the stalk structure of the 60S subunit. They are organized as a pentameric complex in which uL10/P0 interacts with 2 heterodimers of P1 and P2 proteins.</text>
</comment>
<comment type="subcellular location">
    <subcellularLocation>
        <location evidence="3">Cytoplasm</location>
    </subcellularLocation>
</comment>
<comment type="miscellaneous">
    <text>Yeasts contain 4 individual small ribosomal A proteins (RPA) which can be classified into two couples of similar but not identical sequences. Each couple is distinctly related to one of the two A proteins present in multicellular organisms.</text>
</comment>
<comment type="miscellaneous">
    <text>Rpa3 and rpa4 are essential for cell survival, whereas rpa1 and rpa2 are not.</text>
</comment>
<comment type="similarity">
    <text evidence="5">Belongs to the eukaryotic ribosomal protein P1/P2 family.</text>
</comment>
<dbReference type="EMBL" id="M33142">
    <property type="protein sequence ID" value="AAA35337.1"/>
    <property type="molecule type" value="Genomic_DNA"/>
</dbReference>
<dbReference type="EMBL" id="CU329671">
    <property type="protein sequence ID" value="CAA22631.1"/>
    <property type="molecule type" value="Genomic_DNA"/>
</dbReference>
<dbReference type="PIR" id="D34715">
    <property type="entry name" value="R6BY24"/>
</dbReference>
<dbReference type="RefSeq" id="NP_595873.1">
    <property type="nucleotide sequence ID" value="NM_001021779.2"/>
</dbReference>
<dbReference type="SMR" id="P17478"/>
<dbReference type="BioGRID" id="277113">
    <property type="interactions" value="6"/>
</dbReference>
<dbReference type="FunCoup" id="P17478">
    <property type="interactions" value="430"/>
</dbReference>
<dbReference type="IntAct" id="P17478">
    <property type="interactions" value="2"/>
</dbReference>
<dbReference type="MINT" id="P17478"/>
<dbReference type="STRING" id="284812.P17478"/>
<dbReference type="iPTMnet" id="P17478"/>
<dbReference type="PaxDb" id="4896-SPBC23G7.15c.1"/>
<dbReference type="EnsemblFungi" id="SPBC23G7.15c.1">
    <property type="protein sequence ID" value="SPBC23G7.15c.1:pep"/>
    <property type="gene ID" value="SPBC23G7.15c"/>
</dbReference>
<dbReference type="GeneID" id="2540587"/>
<dbReference type="KEGG" id="spo:2540587"/>
<dbReference type="PomBase" id="SPBC23G7.15c">
    <property type="gene designation" value="rpp202"/>
</dbReference>
<dbReference type="VEuPathDB" id="FungiDB:SPBC23G7.15c"/>
<dbReference type="eggNOG" id="KOG3449">
    <property type="taxonomic scope" value="Eukaryota"/>
</dbReference>
<dbReference type="HOGENOM" id="CLU_114656_0_1_1"/>
<dbReference type="InParanoid" id="P17478"/>
<dbReference type="OMA" id="THIVFPY"/>
<dbReference type="PhylomeDB" id="P17478"/>
<dbReference type="PRO" id="PR:P17478"/>
<dbReference type="Proteomes" id="UP000002485">
    <property type="component" value="Chromosome II"/>
</dbReference>
<dbReference type="GO" id="GO:0005829">
    <property type="term" value="C:cytosol"/>
    <property type="evidence" value="ECO:0007005"/>
    <property type="project" value="PomBase"/>
</dbReference>
<dbReference type="GO" id="GO:0022625">
    <property type="term" value="C:cytosolic large ribosomal subunit"/>
    <property type="evidence" value="ECO:0000266"/>
    <property type="project" value="PomBase"/>
</dbReference>
<dbReference type="GO" id="GO:0003735">
    <property type="term" value="F:structural constituent of ribosome"/>
    <property type="evidence" value="ECO:0000266"/>
    <property type="project" value="PomBase"/>
</dbReference>
<dbReference type="GO" id="GO:0002182">
    <property type="term" value="P:cytoplasmic translational elongation"/>
    <property type="evidence" value="ECO:0000266"/>
    <property type="project" value="PomBase"/>
</dbReference>
<dbReference type="CDD" id="cd05833">
    <property type="entry name" value="Ribosomal_P2"/>
    <property type="match status" value="1"/>
</dbReference>
<dbReference type="FunFam" id="1.10.10.1410:FF:000002">
    <property type="entry name" value="60S acidic ribosomal protein P2"/>
    <property type="match status" value="1"/>
</dbReference>
<dbReference type="Gene3D" id="1.10.10.1410">
    <property type="match status" value="1"/>
</dbReference>
<dbReference type="HAMAP" id="MF_01478">
    <property type="entry name" value="Ribosomal_L12_arch"/>
    <property type="match status" value="1"/>
</dbReference>
<dbReference type="InterPro" id="IPR038716">
    <property type="entry name" value="P1/P2_N_sf"/>
</dbReference>
<dbReference type="InterPro" id="IPR027534">
    <property type="entry name" value="Ribosomal_P1/P2"/>
</dbReference>
<dbReference type="InterPro" id="IPR001859">
    <property type="entry name" value="Ribosomal_P1/P2_euk"/>
</dbReference>
<dbReference type="InterPro" id="IPR044076">
    <property type="entry name" value="Ribosomal_P2"/>
</dbReference>
<dbReference type="PANTHER" id="PTHR21141">
    <property type="entry name" value="60S ACIDIC RIBOSOMAL PROTEIN FAMILY MEMBER"/>
    <property type="match status" value="1"/>
</dbReference>
<dbReference type="PANTHER" id="PTHR21141:SF103">
    <property type="entry name" value="LARGE RIBOSOMAL SUBUNIT PROTEIN P2A"/>
    <property type="match status" value="1"/>
</dbReference>
<dbReference type="Pfam" id="PF00428">
    <property type="entry name" value="Ribosomal_60s"/>
    <property type="match status" value="1"/>
</dbReference>
<dbReference type="PRINTS" id="PR00456">
    <property type="entry name" value="RIBOSOMALP2"/>
</dbReference>
<proteinExistence type="evidence at protein level"/>